<sequence>MPKASEIKKGFAIESNGKTLLVKDIEVTTPGGRGGAKIYKMRCTDLNTGARVDERYKSDDVVETVEMNKRAVVYSYADGDEHIFMDNEDYSQYTFKHNEVEDELLFINEDTQGIHLILINGSAVGIELPSSVELVIEETDPSIKGASASARTKPARFASGLVIQVPEYIATGDRVIINTTERKYMSRA</sequence>
<feature type="chain" id="PRO_1000056948" description="Elongation factor P-like protein">
    <location>
        <begin position="1"/>
        <end position="188"/>
    </location>
</feature>
<dbReference type="EMBL" id="CP000789">
    <property type="protein sequence ID" value="ABU71705.1"/>
    <property type="molecule type" value="Genomic_DNA"/>
</dbReference>
<dbReference type="SMR" id="A7MS04"/>
<dbReference type="KEGG" id="vha:VIBHAR_02751"/>
<dbReference type="PATRIC" id="fig|338187.25.peg.3425"/>
<dbReference type="Proteomes" id="UP000008152">
    <property type="component" value="Chromosome I"/>
</dbReference>
<dbReference type="GO" id="GO:0005737">
    <property type="term" value="C:cytoplasm"/>
    <property type="evidence" value="ECO:0007669"/>
    <property type="project" value="InterPro"/>
</dbReference>
<dbReference type="GO" id="GO:0003746">
    <property type="term" value="F:translation elongation factor activity"/>
    <property type="evidence" value="ECO:0007669"/>
    <property type="project" value="UniProtKB-UniRule"/>
</dbReference>
<dbReference type="GO" id="GO:0043043">
    <property type="term" value="P:peptide biosynthetic process"/>
    <property type="evidence" value="ECO:0007669"/>
    <property type="project" value="InterPro"/>
</dbReference>
<dbReference type="CDD" id="cd04470">
    <property type="entry name" value="S1_EF-P_repeat_1"/>
    <property type="match status" value="1"/>
</dbReference>
<dbReference type="CDD" id="cd05794">
    <property type="entry name" value="S1_EF-P_repeat_2"/>
    <property type="match status" value="1"/>
</dbReference>
<dbReference type="FunFam" id="2.40.50.140:FF:000004">
    <property type="entry name" value="Elongation factor P"/>
    <property type="match status" value="1"/>
</dbReference>
<dbReference type="FunFam" id="2.30.30.30:FF:000011">
    <property type="entry name" value="Elongation factor P-like protein"/>
    <property type="match status" value="1"/>
</dbReference>
<dbReference type="Gene3D" id="2.30.30.30">
    <property type="match status" value="1"/>
</dbReference>
<dbReference type="Gene3D" id="2.40.50.140">
    <property type="entry name" value="Nucleic acid-binding proteins"/>
    <property type="match status" value="2"/>
</dbReference>
<dbReference type="HAMAP" id="MF_00646">
    <property type="entry name" value="EFP"/>
    <property type="match status" value="1"/>
</dbReference>
<dbReference type="InterPro" id="IPR015365">
    <property type="entry name" value="Elong-fact-P_C"/>
</dbReference>
<dbReference type="InterPro" id="IPR012340">
    <property type="entry name" value="NA-bd_OB-fold"/>
</dbReference>
<dbReference type="InterPro" id="IPR014722">
    <property type="entry name" value="Rib_uL2_dom2"/>
</dbReference>
<dbReference type="InterPro" id="IPR020599">
    <property type="entry name" value="Transl_elong_fac_P/YeiP"/>
</dbReference>
<dbReference type="InterPro" id="IPR013185">
    <property type="entry name" value="Transl_elong_KOW-like"/>
</dbReference>
<dbReference type="InterPro" id="IPR011897">
    <property type="entry name" value="Transl_elong_p-like_YeiP"/>
</dbReference>
<dbReference type="InterPro" id="IPR001059">
    <property type="entry name" value="Transl_elong_P/YeiP_cen"/>
</dbReference>
<dbReference type="InterPro" id="IPR013852">
    <property type="entry name" value="Transl_elong_P/YeiP_CS"/>
</dbReference>
<dbReference type="InterPro" id="IPR008991">
    <property type="entry name" value="Translation_prot_SH3-like_sf"/>
</dbReference>
<dbReference type="NCBIfam" id="NF001810">
    <property type="entry name" value="PRK00529.1"/>
    <property type="match status" value="1"/>
</dbReference>
<dbReference type="NCBIfam" id="NF003392">
    <property type="entry name" value="PRK04542.1"/>
    <property type="match status" value="1"/>
</dbReference>
<dbReference type="NCBIfam" id="TIGR02178">
    <property type="entry name" value="yeiP"/>
    <property type="match status" value="1"/>
</dbReference>
<dbReference type="PANTHER" id="PTHR30053">
    <property type="entry name" value="ELONGATION FACTOR P"/>
    <property type="match status" value="1"/>
</dbReference>
<dbReference type="PANTHER" id="PTHR30053:SF14">
    <property type="entry name" value="TRANSLATION ELONGATION FACTOR KOW-LIKE DOMAIN-CONTAINING PROTEIN"/>
    <property type="match status" value="1"/>
</dbReference>
<dbReference type="Pfam" id="PF01132">
    <property type="entry name" value="EFP"/>
    <property type="match status" value="1"/>
</dbReference>
<dbReference type="Pfam" id="PF08207">
    <property type="entry name" value="EFP_N"/>
    <property type="match status" value="1"/>
</dbReference>
<dbReference type="Pfam" id="PF09285">
    <property type="entry name" value="Elong-fact-P_C"/>
    <property type="match status" value="1"/>
</dbReference>
<dbReference type="PIRSF" id="PIRSF005901">
    <property type="entry name" value="EF-P"/>
    <property type="match status" value="1"/>
</dbReference>
<dbReference type="SMART" id="SM01185">
    <property type="entry name" value="EFP"/>
    <property type="match status" value="1"/>
</dbReference>
<dbReference type="SMART" id="SM00841">
    <property type="entry name" value="Elong-fact-P_C"/>
    <property type="match status" value="1"/>
</dbReference>
<dbReference type="SUPFAM" id="SSF50249">
    <property type="entry name" value="Nucleic acid-binding proteins"/>
    <property type="match status" value="2"/>
</dbReference>
<dbReference type="SUPFAM" id="SSF50104">
    <property type="entry name" value="Translation proteins SH3-like domain"/>
    <property type="match status" value="1"/>
</dbReference>
<dbReference type="PROSITE" id="PS01275">
    <property type="entry name" value="EFP"/>
    <property type="match status" value="1"/>
</dbReference>
<reference key="1">
    <citation type="submission" date="2007-08" db="EMBL/GenBank/DDBJ databases">
        <authorList>
            <consortium name="The Vibrio harveyi Genome Sequencing Project"/>
            <person name="Bassler B."/>
            <person name="Clifton S.W."/>
            <person name="Fulton L."/>
            <person name="Delehaunty K."/>
            <person name="Fronick C."/>
            <person name="Harrison M."/>
            <person name="Markivic C."/>
            <person name="Fulton R."/>
            <person name="Tin-Wollam A.-M."/>
            <person name="Shah N."/>
            <person name="Pepin K."/>
            <person name="Nash W."/>
            <person name="Thiruvilangam P."/>
            <person name="Bhonagiri V."/>
            <person name="Waters C."/>
            <person name="Tu K.C."/>
            <person name="Irgon J."/>
            <person name="Wilson R.K."/>
        </authorList>
    </citation>
    <scope>NUCLEOTIDE SEQUENCE [LARGE SCALE GENOMIC DNA]</scope>
    <source>
        <strain>ATCC BAA-1116 / BB120</strain>
    </source>
</reference>
<name>EFPL_VIBC1</name>
<accession>A7MS04</accession>
<evidence type="ECO:0000255" key="1">
    <source>
        <dbReference type="HAMAP-Rule" id="MF_00646"/>
    </source>
</evidence>
<organism>
    <name type="scientific">Vibrio campbellii (strain ATCC BAA-1116)</name>
    <dbReference type="NCBI Taxonomy" id="2902295"/>
    <lineage>
        <taxon>Bacteria</taxon>
        <taxon>Pseudomonadati</taxon>
        <taxon>Pseudomonadota</taxon>
        <taxon>Gammaproteobacteria</taxon>
        <taxon>Vibrionales</taxon>
        <taxon>Vibrionaceae</taxon>
        <taxon>Vibrio</taxon>
    </lineage>
</organism>
<gene>
    <name type="ordered locus">VIBHAR_02751</name>
</gene>
<comment type="similarity">
    <text evidence="1">Belongs to the elongation factor P family.</text>
</comment>
<protein>
    <recommendedName>
        <fullName evidence="1">Elongation factor P-like protein</fullName>
    </recommendedName>
</protein>
<proteinExistence type="inferred from homology"/>